<reference key="1">
    <citation type="journal article" date="2003" name="Proc. Natl. Acad. Sci. U.S.A.">
        <title>The complete genome sequence of Mycobacterium bovis.</title>
        <authorList>
            <person name="Garnier T."/>
            <person name="Eiglmeier K."/>
            <person name="Camus J.-C."/>
            <person name="Medina N."/>
            <person name="Mansoor H."/>
            <person name="Pryor M."/>
            <person name="Duthoy S."/>
            <person name="Grondin S."/>
            <person name="Lacroix C."/>
            <person name="Monsempe C."/>
            <person name="Simon S."/>
            <person name="Harris B."/>
            <person name="Atkin R."/>
            <person name="Doggett J."/>
            <person name="Mayes R."/>
            <person name="Keating L."/>
            <person name="Wheeler P.R."/>
            <person name="Parkhill J."/>
            <person name="Barrell B.G."/>
            <person name="Cole S.T."/>
            <person name="Gordon S.V."/>
            <person name="Hewinson R.G."/>
        </authorList>
    </citation>
    <scope>NUCLEOTIDE SEQUENCE [LARGE SCALE GENOMIC DNA]</scope>
    <source>
        <strain>ATCC BAA-935 / AF2122/97</strain>
    </source>
</reference>
<reference key="2">
    <citation type="journal article" date="2017" name="Genome Announc.">
        <title>Updated reference genome sequence and annotation of Mycobacterium bovis AF2122/97.</title>
        <authorList>
            <person name="Malone K.M."/>
            <person name="Farrell D."/>
            <person name="Stuber T.P."/>
            <person name="Schubert O.T."/>
            <person name="Aebersold R."/>
            <person name="Robbe-Austerman S."/>
            <person name="Gordon S.V."/>
        </authorList>
    </citation>
    <scope>NUCLEOTIDE SEQUENCE [LARGE SCALE GENOMIC DNA]</scope>
    <scope>GENOME REANNOTATION</scope>
    <source>
        <strain>ATCC BAA-935 / AF2122/97</strain>
    </source>
</reference>
<gene>
    <name type="primary">glpD1</name>
    <name type="synonym">glpD</name>
    <name type="ordered locus">BQ2027_MB2273C</name>
</gene>
<dbReference type="EC" id="1.1.5.3"/>
<dbReference type="EMBL" id="LT708304">
    <property type="protein sequence ID" value="SIU00884.1"/>
    <property type="molecule type" value="Genomic_DNA"/>
</dbReference>
<dbReference type="RefSeq" id="NP_855922.1">
    <property type="nucleotide sequence ID" value="NC_002945.3"/>
</dbReference>
<dbReference type="RefSeq" id="WP_003411591.1">
    <property type="nucleotide sequence ID" value="NC_002945.4"/>
</dbReference>
<dbReference type="SMR" id="P64183"/>
<dbReference type="KEGG" id="mbo:BQ2027_MB2273C"/>
<dbReference type="PATRIC" id="fig|233413.5.peg.2494"/>
<dbReference type="Proteomes" id="UP000001419">
    <property type="component" value="Chromosome"/>
</dbReference>
<dbReference type="GO" id="GO:0005737">
    <property type="term" value="C:cytoplasm"/>
    <property type="evidence" value="ECO:0007669"/>
    <property type="project" value="UniProtKB-SubCell"/>
</dbReference>
<dbReference type="GO" id="GO:0004368">
    <property type="term" value="F:glycerol-3-phosphate dehydrogenase (quinone) activity"/>
    <property type="evidence" value="ECO:0007669"/>
    <property type="project" value="UniProtKB-EC"/>
</dbReference>
<dbReference type="GO" id="GO:0006071">
    <property type="term" value="P:glycerol metabolic process"/>
    <property type="evidence" value="ECO:0007669"/>
    <property type="project" value="UniProtKB-KW"/>
</dbReference>
<dbReference type="GO" id="GO:0046168">
    <property type="term" value="P:glycerol-3-phosphate catabolic process"/>
    <property type="evidence" value="ECO:0007669"/>
    <property type="project" value="TreeGrafter"/>
</dbReference>
<dbReference type="FunFam" id="1.10.8.870:FF:000012">
    <property type="entry name" value="Glycerol-3-phosphate dehydrogenase"/>
    <property type="match status" value="1"/>
</dbReference>
<dbReference type="Gene3D" id="1.10.8.870">
    <property type="entry name" value="Alpha-glycerophosphate oxidase, cap domain"/>
    <property type="match status" value="1"/>
</dbReference>
<dbReference type="Gene3D" id="3.30.9.10">
    <property type="entry name" value="D-Amino Acid Oxidase, subunit A, domain 2"/>
    <property type="match status" value="1"/>
</dbReference>
<dbReference type="Gene3D" id="3.50.50.60">
    <property type="entry name" value="FAD/NAD(P)-binding domain"/>
    <property type="match status" value="1"/>
</dbReference>
<dbReference type="InterPro" id="IPR031656">
    <property type="entry name" value="DAO_C"/>
</dbReference>
<dbReference type="InterPro" id="IPR038299">
    <property type="entry name" value="DAO_C_sf"/>
</dbReference>
<dbReference type="InterPro" id="IPR006076">
    <property type="entry name" value="FAD-dep_OxRdtase"/>
</dbReference>
<dbReference type="InterPro" id="IPR036188">
    <property type="entry name" value="FAD/NAD-bd_sf"/>
</dbReference>
<dbReference type="InterPro" id="IPR000447">
    <property type="entry name" value="G3P_DH_FAD-dep"/>
</dbReference>
<dbReference type="PANTHER" id="PTHR11985:SF35">
    <property type="entry name" value="ANAEROBIC GLYCEROL-3-PHOSPHATE DEHYDROGENASE SUBUNIT A"/>
    <property type="match status" value="1"/>
</dbReference>
<dbReference type="PANTHER" id="PTHR11985">
    <property type="entry name" value="GLYCEROL-3-PHOSPHATE DEHYDROGENASE"/>
    <property type="match status" value="1"/>
</dbReference>
<dbReference type="Pfam" id="PF01266">
    <property type="entry name" value="DAO"/>
    <property type="match status" value="1"/>
</dbReference>
<dbReference type="Pfam" id="PF16901">
    <property type="entry name" value="DAO_C"/>
    <property type="match status" value="1"/>
</dbReference>
<dbReference type="PRINTS" id="PR01001">
    <property type="entry name" value="FADG3PDH"/>
</dbReference>
<dbReference type="SUPFAM" id="SSF51905">
    <property type="entry name" value="FAD/NAD(P)-binding domain"/>
    <property type="match status" value="1"/>
</dbReference>
<dbReference type="PROSITE" id="PS00977">
    <property type="entry name" value="FAD_G3PDH_1"/>
    <property type="match status" value="1"/>
</dbReference>
<dbReference type="PROSITE" id="PS00978">
    <property type="entry name" value="FAD_G3PDH_2"/>
    <property type="match status" value="1"/>
</dbReference>
<proteinExistence type="inferred from homology"/>
<protein>
    <recommendedName>
        <fullName>Glycerol-3-phosphate dehydrogenase 1</fullName>
        <ecNumber>1.1.5.3</ecNumber>
    </recommendedName>
</protein>
<name>GLPD1_MYCBO</name>
<organism>
    <name type="scientific">Mycobacterium bovis (strain ATCC BAA-935 / AF2122/97)</name>
    <dbReference type="NCBI Taxonomy" id="233413"/>
    <lineage>
        <taxon>Bacteria</taxon>
        <taxon>Bacillati</taxon>
        <taxon>Actinomycetota</taxon>
        <taxon>Actinomycetes</taxon>
        <taxon>Mycobacteriales</taxon>
        <taxon>Mycobacteriaceae</taxon>
        <taxon>Mycobacterium</taxon>
        <taxon>Mycobacterium tuberculosis complex</taxon>
    </lineage>
</organism>
<comment type="catalytic activity">
    <reaction>
        <text>a quinone + sn-glycerol 3-phosphate = dihydroxyacetone phosphate + a quinol</text>
        <dbReference type="Rhea" id="RHEA:18977"/>
        <dbReference type="ChEBI" id="CHEBI:24646"/>
        <dbReference type="ChEBI" id="CHEBI:57597"/>
        <dbReference type="ChEBI" id="CHEBI:57642"/>
        <dbReference type="ChEBI" id="CHEBI:132124"/>
        <dbReference type="EC" id="1.1.5.3"/>
    </reaction>
</comment>
<comment type="cofactor">
    <cofactor>
        <name>FAD</name>
        <dbReference type="ChEBI" id="CHEBI:57692"/>
    </cofactor>
</comment>
<comment type="subcellular location">
    <subcellularLocation>
        <location evidence="1">Cytoplasm</location>
    </subcellularLocation>
</comment>
<comment type="similarity">
    <text evidence="2">Belongs to the FAD-dependent glycerol-3-phosphate dehydrogenase family.</text>
</comment>
<keyword id="KW-0963">Cytoplasm</keyword>
<keyword id="KW-0274">FAD</keyword>
<keyword id="KW-0285">Flavoprotein</keyword>
<keyword id="KW-0319">Glycerol metabolism</keyword>
<keyword id="KW-0560">Oxidoreductase</keyword>
<keyword id="KW-1185">Reference proteome</keyword>
<accession>P64183</accession>
<accession>A0A1R3Y2T0</accession>
<accession>Q10502</accession>
<accession>X2BK71</accession>
<feature type="chain" id="PRO_0000126101" description="Glycerol-3-phosphate dehydrogenase 1">
    <location>
        <begin position="1"/>
        <end position="516"/>
    </location>
</feature>
<feature type="binding site" evidence="1">
    <location>
        <begin position="28"/>
        <end position="56"/>
    </location>
    <ligand>
        <name>FAD</name>
        <dbReference type="ChEBI" id="CHEBI:57692"/>
    </ligand>
</feature>
<sequence length="516" mass="54176">MLMPHSAALNAARRSADLTALADGGALDVIVIGGGITGVGIALDAATRGLTVALVEKHDLAFGTSRWSSKLVHGGLRYLASGNVGIARRSAVERGILMTRNAPHLVHAMPQLVPLLPSMGHTKRALVRAGFLAGDALRVLAGTPAATLPRSRRIPASRVVEIAPTVRRDGLDGGLLAYDGQLIDDARLVMAVARTAAQHGARILTYVGASNVTGTSVELTDRRTRQSFALSARAVINAAGVWAGEIDPSLRLRPSRGTHLVFDAKSFANPTAALTIPIPGELNRFVFAMPEQLGRIYLGLTDEDAPGPIPDVPQPSSEEITFLLDTVNTALGTAVGTKDVIGAYAGLRPLIDTGGAGVQGRTADVSRDHAVFESPSGVISVVGGKLTEYRYMAEDVLNRAITLRHLRAAKCRTRNLPLIGAPANPGPAPGSGAGLPESLVARYGAEAANVAAAATCERPTEPVADGIDVTRAEFEYAVTHEGALDVDDILDRRTRIGLVPRDRERVVAVAKEFLSR</sequence>
<evidence type="ECO:0000250" key="1"/>
<evidence type="ECO:0000305" key="2"/>